<evidence type="ECO:0000255" key="1">
    <source>
        <dbReference type="HAMAP-Rule" id="MF_00605"/>
    </source>
</evidence>
<protein>
    <recommendedName>
        <fullName evidence="1">tRNA (guanine-N(1)-)-methyltransferase</fullName>
        <ecNumber evidence="1">2.1.1.228</ecNumber>
    </recommendedName>
    <alternativeName>
        <fullName evidence="1">M1G-methyltransferase</fullName>
    </alternativeName>
    <alternativeName>
        <fullName evidence="1">tRNA [GM37] methyltransferase</fullName>
    </alternativeName>
</protein>
<keyword id="KW-0963">Cytoplasm</keyword>
<keyword id="KW-0489">Methyltransferase</keyword>
<keyword id="KW-1185">Reference proteome</keyword>
<keyword id="KW-0949">S-adenosyl-L-methionine</keyword>
<keyword id="KW-0808">Transferase</keyword>
<keyword id="KW-0819">tRNA processing</keyword>
<proteinExistence type="inferred from homology"/>
<sequence length="247" mass="27121">MKFDILTLFPAMFDGPLTESILKRAAEKGLIEVKLHNIRDFAFDRHSVTDDYPYGGGAGMVMKVEPLAACIEHAKVGSPRARVILTTPRGRSFNHAVAEELAREEALIIICGRYEGVDERVRELFVDDEISIGDFVLTGGEMAAMVLVDAVSRFVPGVLGSDESAVNDSFADGLLEYPQYTRPAEFRGLGVPSVLLSGNHQEIAKWRRRQSLGRTAASRPDLLTDAHLSASDREYLEELQRVAGSDG</sequence>
<gene>
    <name evidence="1" type="primary">trmD</name>
    <name type="ordered locus">Gura_3760</name>
</gene>
<organism>
    <name type="scientific">Geotalea uraniireducens (strain Rf4)</name>
    <name type="common">Geobacter uraniireducens</name>
    <dbReference type="NCBI Taxonomy" id="351605"/>
    <lineage>
        <taxon>Bacteria</taxon>
        <taxon>Pseudomonadati</taxon>
        <taxon>Thermodesulfobacteriota</taxon>
        <taxon>Desulfuromonadia</taxon>
        <taxon>Geobacterales</taxon>
        <taxon>Geobacteraceae</taxon>
        <taxon>Geotalea</taxon>
    </lineage>
</organism>
<dbReference type="EC" id="2.1.1.228" evidence="1"/>
<dbReference type="EMBL" id="CP000698">
    <property type="protein sequence ID" value="ABQ27913.1"/>
    <property type="molecule type" value="Genomic_DNA"/>
</dbReference>
<dbReference type="RefSeq" id="WP_011940562.1">
    <property type="nucleotide sequence ID" value="NC_009483.1"/>
</dbReference>
<dbReference type="SMR" id="A5G7Z5"/>
<dbReference type="STRING" id="351605.Gura_3760"/>
<dbReference type="KEGG" id="gur:Gura_3760"/>
<dbReference type="HOGENOM" id="CLU_047363_0_1_7"/>
<dbReference type="OrthoDB" id="9807416at2"/>
<dbReference type="Proteomes" id="UP000006695">
    <property type="component" value="Chromosome"/>
</dbReference>
<dbReference type="GO" id="GO:0005829">
    <property type="term" value="C:cytosol"/>
    <property type="evidence" value="ECO:0007669"/>
    <property type="project" value="TreeGrafter"/>
</dbReference>
<dbReference type="GO" id="GO:0052906">
    <property type="term" value="F:tRNA (guanine(37)-N1)-methyltransferase activity"/>
    <property type="evidence" value="ECO:0007669"/>
    <property type="project" value="UniProtKB-UniRule"/>
</dbReference>
<dbReference type="GO" id="GO:0002939">
    <property type="term" value="P:tRNA N1-guanine methylation"/>
    <property type="evidence" value="ECO:0007669"/>
    <property type="project" value="TreeGrafter"/>
</dbReference>
<dbReference type="CDD" id="cd18080">
    <property type="entry name" value="TrmD-like"/>
    <property type="match status" value="1"/>
</dbReference>
<dbReference type="FunFam" id="1.10.1270.20:FF:000001">
    <property type="entry name" value="tRNA (guanine-N(1)-)-methyltransferase"/>
    <property type="match status" value="1"/>
</dbReference>
<dbReference type="FunFam" id="3.40.1280.10:FF:000001">
    <property type="entry name" value="tRNA (guanine-N(1)-)-methyltransferase"/>
    <property type="match status" value="1"/>
</dbReference>
<dbReference type="Gene3D" id="3.40.1280.10">
    <property type="match status" value="1"/>
</dbReference>
<dbReference type="Gene3D" id="1.10.1270.20">
    <property type="entry name" value="tRNA(m1g37)methyltransferase, domain 2"/>
    <property type="match status" value="1"/>
</dbReference>
<dbReference type="HAMAP" id="MF_00605">
    <property type="entry name" value="TrmD"/>
    <property type="match status" value="1"/>
</dbReference>
<dbReference type="InterPro" id="IPR029028">
    <property type="entry name" value="Alpha/beta_knot_MTases"/>
</dbReference>
<dbReference type="InterPro" id="IPR023148">
    <property type="entry name" value="tRNA_m1G_MeTrfase_C_sf"/>
</dbReference>
<dbReference type="InterPro" id="IPR002649">
    <property type="entry name" value="tRNA_m1G_MeTrfase_TrmD"/>
</dbReference>
<dbReference type="InterPro" id="IPR029026">
    <property type="entry name" value="tRNA_m1G_MTases_N"/>
</dbReference>
<dbReference type="InterPro" id="IPR016009">
    <property type="entry name" value="tRNA_MeTrfase_TRMD/TRM10"/>
</dbReference>
<dbReference type="NCBIfam" id="NF000648">
    <property type="entry name" value="PRK00026.1"/>
    <property type="match status" value="1"/>
</dbReference>
<dbReference type="NCBIfam" id="TIGR00088">
    <property type="entry name" value="trmD"/>
    <property type="match status" value="1"/>
</dbReference>
<dbReference type="PANTHER" id="PTHR46417">
    <property type="entry name" value="TRNA (GUANINE-N(1)-)-METHYLTRANSFERASE"/>
    <property type="match status" value="1"/>
</dbReference>
<dbReference type="PANTHER" id="PTHR46417:SF1">
    <property type="entry name" value="TRNA (GUANINE-N(1)-)-METHYLTRANSFERASE"/>
    <property type="match status" value="1"/>
</dbReference>
<dbReference type="Pfam" id="PF01746">
    <property type="entry name" value="tRNA_m1G_MT"/>
    <property type="match status" value="1"/>
</dbReference>
<dbReference type="PIRSF" id="PIRSF000386">
    <property type="entry name" value="tRNA_mtase"/>
    <property type="match status" value="1"/>
</dbReference>
<dbReference type="SUPFAM" id="SSF75217">
    <property type="entry name" value="alpha/beta knot"/>
    <property type="match status" value="1"/>
</dbReference>
<reference key="1">
    <citation type="submission" date="2007-05" db="EMBL/GenBank/DDBJ databases">
        <title>Complete sequence of Geobacter uraniireducens Rf4.</title>
        <authorList>
            <consortium name="US DOE Joint Genome Institute"/>
            <person name="Copeland A."/>
            <person name="Lucas S."/>
            <person name="Lapidus A."/>
            <person name="Barry K."/>
            <person name="Detter J.C."/>
            <person name="Glavina del Rio T."/>
            <person name="Hammon N."/>
            <person name="Israni S."/>
            <person name="Dalin E."/>
            <person name="Tice H."/>
            <person name="Pitluck S."/>
            <person name="Chertkov O."/>
            <person name="Brettin T."/>
            <person name="Bruce D."/>
            <person name="Han C."/>
            <person name="Schmutz J."/>
            <person name="Larimer F."/>
            <person name="Land M."/>
            <person name="Hauser L."/>
            <person name="Kyrpides N."/>
            <person name="Mikhailova N."/>
            <person name="Shelobolina E."/>
            <person name="Aklujkar M."/>
            <person name="Lovley D."/>
            <person name="Richardson P."/>
        </authorList>
    </citation>
    <scope>NUCLEOTIDE SEQUENCE [LARGE SCALE GENOMIC DNA]</scope>
    <source>
        <strain>ATCC BAA-1134 / JCM 13001 / Rf4</strain>
    </source>
</reference>
<comment type="function">
    <text evidence="1">Specifically methylates guanosine-37 in various tRNAs.</text>
</comment>
<comment type="catalytic activity">
    <reaction evidence="1">
        <text>guanosine(37) in tRNA + S-adenosyl-L-methionine = N(1)-methylguanosine(37) in tRNA + S-adenosyl-L-homocysteine + H(+)</text>
        <dbReference type="Rhea" id="RHEA:36899"/>
        <dbReference type="Rhea" id="RHEA-COMP:10145"/>
        <dbReference type="Rhea" id="RHEA-COMP:10147"/>
        <dbReference type="ChEBI" id="CHEBI:15378"/>
        <dbReference type="ChEBI" id="CHEBI:57856"/>
        <dbReference type="ChEBI" id="CHEBI:59789"/>
        <dbReference type="ChEBI" id="CHEBI:73542"/>
        <dbReference type="ChEBI" id="CHEBI:74269"/>
        <dbReference type="EC" id="2.1.1.228"/>
    </reaction>
</comment>
<comment type="subunit">
    <text evidence="1">Homodimer.</text>
</comment>
<comment type="subcellular location">
    <subcellularLocation>
        <location evidence="1">Cytoplasm</location>
    </subcellularLocation>
</comment>
<comment type="similarity">
    <text evidence="1">Belongs to the RNA methyltransferase TrmD family.</text>
</comment>
<feature type="chain" id="PRO_1000082520" description="tRNA (guanine-N(1)-)-methyltransferase">
    <location>
        <begin position="1"/>
        <end position="247"/>
    </location>
</feature>
<feature type="binding site" evidence="1">
    <location>
        <position position="112"/>
    </location>
    <ligand>
        <name>S-adenosyl-L-methionine</name>
        <dbReference type="ChEBI" id="CHEBI:59789"/>
    </ligand>
</feature>
<feature type="binding site" evidence="1">
    <location>
        <begin position="132"/>
        <end position="137"/>
    </location>
    <ligand>
        <name>S-adenosyl-L-methionine</name>
        <dbReference type="ChEBI" id="CHEBI:59789"/>
    </ligand>
</feature>
<accession>A5G7Z5</accession>
<name>TRMD_GEOUR</name>